<protein>
    <recommendedName>
        <fullName>Uncharacterized protein MJ0013</fullName>
    </recommendedName>
</protein>
<feature type="chain" id="PRO_0000106653" description="Uncharacterized protein MJ0013">
    <location>
        <begin position="1"/>
        <end position="162"/>
    </location>
</feature>
<organism>
    <name type="scientific">Methanocaldococcus jannaschii (strain ATCC 43067 / DSM 2661 / JAL-1 / JCM 10045 / NBRC 100440)</name>
    <name type="common">Methanococcus jannaschii</name>
    <dbReference type="NCBI Taxonomy" id="243232"/>
    <lineage>
        <taxon>Archaea</taxon>
        <taxon>Methanobacteriati</taxon>
        <taxon>Methanobacteriota</taxon>
        <taxon>Methanomada group</taxon>
        <taxon>Methanococci</taxon>
        <taxon>Methanococcales</taxon>
        <taxon>Methanocaldococcaceae</taxon>
        <taxon>Methanocaldococcus</taxon>
    </lineage>
</organism>
<keyword id="KW-1185">Reference proteome</keyword>
<accession>Q60321</accession>
<sequence length="162" mass="19588">MPKKKNKLPTEIVLTYKVKHNHDLKNLPDEFIKISQRAIDIIWENINWKEKVVKHRYKIGKKKYKYYTTTRLIPKIPKDNDFKRELRNRLLEGWEFASHYVDGAIKTAYSAIESWKSNYLNVNRKKNKPIFKRPFVRVKTTLMKYDRKNGIIRITIKPRKSI</sequence>
<name>Y013_METJA</name>
<proteinExistence type="predicted"/>
<reference key="1">
    <citation type="journal article" date="1996" name="Science">
        <title>Complete genome sequence of the methanogenic archaeon, Methanococcus jannaschii.</title>
        <authorList>
            <person name="Bult C.J."/>
            <person name="White O."/>
            <person name="Olsen G.J."/>
            <person name="Zhou L."/>
            <person name="Fleischmann R.D."/>
            <person name="Sutton G.G."/>
            <person name="Blake J.A."/>
            <person name="FitzGerald L.M."/>
            <person name="Clayton R.A."/>
            <person name="Gocayne J.D."/>
            <person name="Kerlavage A.R."/>
            <person name="Dougherty B.A."/>
            <person name="Tomb J.-F."/>
            <person name="Adams M.D."/>
            <person name="Reich C.I."/>
            <person name="Overbeek R."/>
            <person name="Kirkness E.F."/>
            <person name="Weinstock K.G."/>
            <person name="Merrick J.M."/>
            <person name="Glodek A."/>
            <person name="Scott J.L."/>
            <person name="Geoghagen N.S.M."/>
            <person name="Weidman J.F."/>
            <person name="Fuhrmann J.L."/>
            <person name="Nguyen D."/>
            <person name="Utterback T.R."/>
            <person name="Kelley J.M."/>
            <person name="Peterson J.D."/>
            <person name="Sadow P.W."/>
            <person name="Hanna M.C."/>
            <person name="Cotton M.D."/>
            <person name="Roberts K.M."/>
            <person name="Hurst M.A."/>
            <person name="Kaine B.P."/>
            <person name="Borodovsky M."/>
            <person name="Klenk H.-P."/>
            <person name="Fraser C.M."/>
            <person name="Smith H.O."/>
            <person name="Woese C.R."/>
            <person name="Venter J.C."/>
        </authorList>
    </citation>
    <scope>NUCLEOTIDE SEQUENCE [LARGE SCALE GENOMIC DNA]</scope>
    <source>
        <strain>ATCC 43067 / DSM 2661 / JAL-1 / JCM 10045 / NBRC 100440</strain>
    </source>
</reference>
<dbReference type="EMBL" id="L77117">
    <property type="protein sequence ID" value="AAB98000.1"/>
    <property type="molecule type" value="Genomic_DNA"/>
</dbReference>
<dbReference type="PIR" id="E64301">
    <property type="entry name" value="E64301"/>
</dbReference>
<dbReference type="SMR" id="Q60321"/>
<dbReference type="STRING" id="243232.MJ_0013"/>
<dbReference type="PaxDb" id="243232-MJ_0013"/>
<dbReference type="EnsemblBacteria" id="AAB98000">
    <property type="protein sequence ID" value="AAB98000"/>
    <property type="gene ID" value="MJ_0013"/>
</dbReference>
<dbReference type="KEGG" id="mja:MJ_0013"/>
<dbReference type="eggNOG" id="arCOG00679">
    <property type="taxonomic scope" value="Archaea"/>
</dbReference>
<dbReference type="HOGENOM" id="CLU_1631660_0_0_2"/>
<dbReference type="InParanoid" id="Q60321"/>
<dbReference type="PhylomeDB" id="Q60321"/>
<dbReference type="Proteomes" id="UP000000805">
    <property type="component" value="Chromosome"/>
</dbReference>
<gene>
    <name type="ordered locus">MJ0013</name>
</gene>